<dbReference type="EMBL" id="CP000252">
    <property type="protein sequence ID" value="ABC76170.1"/>
    <property type="molecule type" value="Genomic_DNA"/>
</dbReference>
<dbReference type="RefSeq" id="WP_011416204.1">
    <property type="nucleotide sequence ID" value="NC_007759.1"/>
</dbReference>
<dbReference type="SMR" id="Q2LQ89"/>
<dbReference type="FunCoup" id="Q2LQ89">
    <property type="interactions" value="538"/>
</dbReference>
<dbReference type="STRING" id="56780.SYN_00067"/>
<dbReference type="KEGG" id="sat:SYN_00067"/>
<dbReference type="eggNOG" id="COG0244">
    <property type="taxonomic scope" value="Bacteria"/>
</dbReference>
<dbReference type="HOGENOM" id="CLU_092227_1_2_7"/>
<dbReference type="InParanoid" id="Q2LQ89"/>
<dbReference type="OrthoDB" id="3186107at2"/>
<dbReference type="Proteomes" id="UP000001933">
    <property type="component" value="Chromosome"/>
</dbReference>
<dbReference type="GO" id="GO:1990904">
    <property type="term" value="C:ribonucleoprotein complex"/>
    <property type="evidence" value="ECO:0007669"/>
    <property type="project" value="UniProtKB-KW"/>
</dbReference>
<dbReference type="GO" id="GO:0005840">
    <property type="term" value="C:ribosome"/>
    <property type="evidence" value="ECO:0007669"/>
    <property type="project" value="UniProtKB-KW"/>
</dbReference>
<dbReference type="GO" id="GO:0070180">
    <property type="term" value="F:large ribosomal subunit rRNA binding"/>
    <property type="evidence" value="ECO:0007669"/>
    <property type="project" value="UniProtKB-UniRule"/>
</dbReference>
<dbReference type="GO" id="GO:0006412">
    <property type="term" value="P:translation"/>
    <property type="evidence" value="ECO:0007669"/>
    <property type="project" value="UniProtKB-UniRule"/>
</dbReference>
<dbReference type="CDD" id="cd05797">
    <property type="entry name" value="Ribosomal_L10"/>
    <property type="match status" value="1"/>
</dbReference>
<dbReference type="Gene3D" id="3.30.70.1730">
    <property type="match status" value="1"/>
</dbReference>
<dbReference type="Gene3D" id="6.10.250.290">
    <property type="match status" value="1"/>
</dbReference>
<dbReference type="HAMAP" id="MF_00362">
    <property type="entry name" value="Ribosomal_uL10"/>
    <property type="match status" value="1"/>
</dbReference>
<dbReference type="InterPro" id="IPR001790">
    <property type="entry name" value="Ribosomal_uL10"/>
</dbReference>
<dbReference type="InterPro" id="IPR043141">
    <property type="entry name" value="Ribosomal_uL10-like_sf"/>
</dbReference>
<dbReference type="InterPro" id="IPR022973">
    <property type="entry name" value="Ribosomal_uL10_bac"/>
</dbReference>
<dbReference type="InterPro" id="IPR047865">
    <property type="entry name" value="Ribosomal_uL10_bac_type"/>
</dbReference>
<dbReference type="NCBIfam" id="NF000955">
    <property type="entry name" value="PRK00099.1-1"/>
    <property type="match status" value="1"/>
</dbReference>
<dbReference type="PANTHER" id="PTHR11560">
    <property type="entry name" value="39S RIBOSOMAL PROTEIN L10, MITOCHONDRIAL"/>
    <property type="match status" value="1"/>
</dbReference>
<dbReference type="Pfam" id="PF00466">
    <property type="entry name" value="Ribosomal_L10"/>
    <property type="match status" value="1"/>
</dbReference>
<dbReference type="SUPFAM" id="SSF160369">
    <property type="entry name" value="Ribosomal protein L10-like"/>
    <property type="match status" value="1"/>
</dbReference>
<protein>
    <recommendedName>
        <fullName evidence="1">Large ribosomal subunit protein uL10</fullName>
    </recommendedName>
    <alternativeName>
        <fullName evidence="2">50S ribosomal protein L10</fullName>
    </alternativeName>
</protein>
<name>RL10_SYNAS</name>
<accession>Q2LQ89</accession>
<gene>
    <name evidence="1" type="primary">rplJ</name>
    <name type="ordered locus">SYNAS_02910</name>
    <name type="ORF">SYN_00067</name>
</gene>
<feature type="chain" id="PRO_0000234901" description="Large ribosomal subunit protein uL10">
    <location>
        <begin position="1"/>
        <end position="174"/>
    </location>
</feature>
<organism>
    <name type="scientific">Syntrophus aciditrophicus (strain SB)</name>
    <dbReference type="NCBI Taxonomy" id="56780"/>
    <lineage>
        <taxon>Bacteria</taxon>
        <taxon>Pseudomonadati</taxon>
        <taxon>Thermodesulfobacteriota</taxon>
        <taxon>Syntrophia</taxon>
        <taxon>Syntrophales</taxon>
        <taxon>Syntrophaceae</taxon>
        <taxon>Syntrophus</taxon>
    </lineage>
</organism>
<comment type="function">
    <text evidence="1">Forms part of the ribosomal stalk, playing a central role in the interaction of the ribosome with GTP-bound translation factors.</text>
</comment>
<comment type="subunit">
    <text evidence="1">Part of the ribosomal stalk of the 50S ribosomal subunit. The N-terminus interacts with L11 and the large rRNA to form the base of the stalk. The C-terminus forms an elongated spine to which L12 dimers bind in a sequential fashion forming a multimeric L10(L12)X complex.</text>
</comment>
<comment type="similarity">
    <text evidence="1">Belongs to the universal ribosomal protein uL10 family.</text>
</comment>
<reference key="1">
    <citation type="journal article" date="2007" name="Proc. Natl. Acad. Sci. U.S.A.">
        <title>The genome of Syntrophus aciditrophicus: life at the thermodynamic limit of microbial growth.</title>
        <authorList>
            <person name="McInerney M.J."/>
            <person name="Rohlin L."/>
            <person name="Mouttaki H."/>
            <person name="Kim U."/>
            <person name="Krupp R.S."/>
            <person name="Rios-Hernandez L."/>
            <person name="Sieber J."/>
            <person name="Struchtemeyer C.G."/>
            <person name="Bhattacharyya A."/>
            <person name="Campbell J.W."/>
            <person name="Gunsalus R.P."/>
        </authorList>
    </citation>
    <scope>NUCLEOTIDE SEQUENCE [LARGE SCALE GENOMIC DNA]</scope>
    <source>
        <strain>SB</strain>
    </source>
</reference>
<proteinExistence type="inferred from homology"/>
<sequence>MDRRTKEQVAVELHEKVKSFKLAVLANFSGMGVAKMTTLRNDLRKSNAELKVVKNTLLRIASRDTSLEALQDDFKGPLALILGYGDPVEPSKILSDFAKKNAELELKIGMLSDKVITVEQLSALAELPSREILLAKLLSVMVGVQTQLVNVLSAVPRGLVQVLDGYRAKKEESN</sequence>
<keyword id="KW-1185">Reference proteome</keyword>
<keyword id="KW-0687">Ribonucleoprotein</keyword>
<keyword id="KW-0689">Ribosomal protein</keyword>
<keyword id="KW-0694">RNA-binding</keyword>
<keyword id="KW-0699">rRNA-binding</keyword>
<evidence type="ECO:0000255" key="1">
    <source>
        <dbReference type="HAMAP-Rule" id="MF_00362"/>
    </source>
</evidence>
<evidence type="ECO:0000305" key="2"/>